<feature type="chain" id="PRO_0000403382" description="Geranyl diphosphate 2-C-methyltransferase">
    <location>
        <begin position="1"/>
        <end position="285"/>
    </location>
</feature>
<comment type="function">
    <text evidence="2">Catalyzes the SAM-dependent methylation of geranyl diphosphate (GPP) to yield (E)-2-methylgeranyl diphosphate (2-MeGPP).</text>
</comment>
<comment type="catalytic activity">
    <reaction>
        <text>(2E)-geranyl diphosphate + S-adenosyl-L-methionine = (E)-2-methylgeranyl diphosphate + S-adenosyl-L-homocysteine + H(+)</text>
        <dbReference type="Rhea" id="RHEA:32519"/>
        <dbReference type="ChEBI" id="CHEBI:15378"/>
        <dbReference type="ChEBI" id="CHEBI:57856"/>
        <dbReference type="ChEBI" id="CHEBI:58057"/>
        <dbReference type="ChEBI" id="CHEBI:59789"/>
        <dbReference type="ChEBI" id="CHEBI:61984"/>
        <dbReference type="EC" id="2.1.1.255"/>
    </reaction>
</comment>
<comment type="cofactor">
    <cofactor evidence="1">
        <name>Mg(2+)</name>
        <dbReference type="ChEBI" id="CHEBI:18420"/>
    </cofactor>
</comment>
<comment type="similarity">
    <text evidence="1">Belongs to the geranyl diphosphate 2-C-methyltransferase family.</text>
</comment>
<organism>
    <name type="scientific">Saccharopolyspora erythraea (strain ATCC 11635 / DSM 40517 / JCM 4748 / NBRC 13426 / NCIMB 8594 / NRRL 2338)</name>
    <dbReference type="NCBI Taxonomy" id="405948"/>
    <lineage>
        <taxon>Bacteria</taxon>
        <taxon>Bacillati</taxon>
        <taxon>Actinomycetota</taxon>
        <taxon>Actinomycetes</taxon>
        <taxon>Pseudonocardiales</taxon>
        <taxon>Pseudonocardiaceae</taxon>
        <taxon>Saccharopolyspora</taxon>
    </lineage>
</organism>
<protein>
    <recommendedName>
        <fullName>Geranyl diphosphate 2-C-methyltransferase</fullName>
        <shortName>GPP methyltransferase</shortName>
        <ecNumber>2.1.1.255</ecNumber>
    </recommendedName>
</protein>
<proteinExistence type="evidence at protein level"/>
<sequence length="285" mass="31767">MTKSIHENGTAASVYQGSIAEYWNQEANPVNLELGEVDGYFHHHYGIGEPDWSVVEGDAATSHERTTRELHRLETWQAEFLLDHLGGVEPEHRIMDAGCGRGGSSFMAHERFGCSVEGVSLSRKQVDFANAQARERGVADKVAFHQLNMLDTGFDTASMRAIWNNESTMYVDLHDLFAEHSRLLARGGRYVTITGCYNDVYGLPSRAVSTINAHYICDIHPRSGYFRAMAANRLVPCAVVDLTEATVPYWRLRAKSPLATGIEETFIEAYTSGSFQYLLIAADRV</sequence>
<evidence type="ECO:0000305" key="1"/>
<evidence type="ECO:0000305" key="2">
    <source>
    </source>
</evidence>
<accession>A4FG18</accession>
<name>GPPMT_SACEN</name>
<reference key="1">
    <citation type="journal article" date="2007" name="Nat. Biotechnol.">
        <title>Complete genome sequence of the erythromycin-producing bacterium Saccharopolyspora erythraea NRRL23338.</title>
        <authorList>
            <person name="Oliynyk M."/>
            <person name="Samborskyy M."/>
            <person name="Lester J.B."/>
            <person name="Mironenko T."/>
            <person name="Scott N."/>
            <person name="Dickens S."/>
            <person name="Haydock S.F."/>
            <person name="Leadlay P.F."/>
        </authorList>
    </citation>
    <scope>NUCLEOTIDE SEQUENCE [LARGE SCALE GENOMIC DNA]</scope>
    <source>
        <strain>ATCC 11635 / DSM 40517 / JCM 4748 / NBRC 13426 / NCIMB 8594 / NRRL 2338</strain>
    </source>
</reference>
<reference key="2">
    <citation type="journal article" date="2008" name="Proc. Natl. Acad. Sci. U.S.A.">
        <title>Identification and functional analysis of genes controlling biosynthesis of 2-methylisoborneol.</title>
        <authorList>
            <person name="Komatsu M."/>
            <person name="Tsuda M."/>
            <person name="Omura S."/>
            <person name="Oikawa H."/>
            <person name="Ikeda H."/>
        </authorList>
    </citation>
    <scope>FUNCTION IN 2-METHYLISOBORNEOL BIOSYNTHESIS</scope>
    <scope>PATHWAY</scope>
</reference>
<dbReference type="EC" id="2.1.1.255"/>
<dbReference type="EMBL" id="AM420293">
    <property type="protein sequence ID" value="CAM02993.1"/>
    <property type="molecule type" value="Genomic_DNA"/>
</dbReference>
<dbReference type="RefSeq" id="WP_009948569.1">
    <property type="nucleotide sequence ID" value="NC_009142.1"/>
</dbReference>
<dbReference type="SMR" id="A4FG18"/>
<dbReference type="STRING" id="405948.SACE_3721"/>
<dbReference type="KEGG" id="sen:SACE_3721"/>
<dbReference type="eggNOG" id="COG2230">
    <property type="taxonomic scope" value="Bacteria"/>
</dbReference>
<dbReference type="HOGENOM" id="CLU_1057338_0_0_11"/>
<dbReference type="OrthoDB" id="3279989at2"/>
<dbReference type="BRENDA" id="2.1.1.255">
    <property type="organism ID" value="5518"/>
</dbReference>
<dbReference type="Proteomes" id="UP000006728">
    <property type="component" value="Chromosome"/>
</dbReference>
<dbReference type="GO" id="GO:0008169">
    <property type="term" value="F:C-methyltransferase activity"/>
    <property type="evidence" value="ECO:0000250"/>
    <property type="project" value="UniProtKB"/>
</dbReference>
<dbReference type="GO" id="GO:0000287">
    <property type="term" value="F:magnesium ion binding"/>
    <property type="evidence" value="ECO:0007669"/>
    <property type="project" value="InterPro"/>
</dbReference>
<dbReference type="GO" id="GO:1904047">
    <property type="term" value="F:S-adenosyl-L-methionine binding"/>
    <property type="evidence" value="ECO:0007669"/>
    <property type="project" value="InterPro"/>
</dbReference>
<dbReference type="GO" id="GO:0008757">
    <property type="term" value="F:S-adenosylmethionine-dependent methyltransferase activity"/>
    <property type="evidence" value="ECO:0000250"/>
    <property type="project" value="UniProtKB"/>
</dbReference>
<dbReference type="GO" id="GO:0032259">
    <property type="term" value="P:methylation"/>
    <property type="evidence" value="ECO:0007669"/>
    <property type="project" value="UniProtKB-KW"/>
</dbReference>
<dbReference type="GO" id="GO:0042214">
    <property type="term" value="P:terpene metabolic process"/>
    <property type="evidence" value="ECO:0000314"/>
    <property type="project" value="UniProtKB"/>
</dbReference>
<dbReference type="CDD" id="cd02440">
    <property type="entry name" value="AdoMet_MTases"/>
    <property type="match status" value="1"/>
</dbReference>
<dbReference type="Gene3D" id="3.40.50.150">
    <property type="entry name" value="Vaccinia Virus protein VP39"/>
    <property type="match status" value="1"/>
</dbReference>
<dbReference type="InterPro" id="IPR050447">
    <property type="entry name" value="Erg6_SMT_methyltransf"/>
</dbReference>
<dbReference type="InterPro" id="IPR049645">
    <property type="entry name" value="GPPMT_Stmyces"/>
</dbReference>
<dbReference type="InterPro" id="IPR041698">
    <property type="entry name" value="Methyltransf_25"/>
</dbReference>
<dbReference type="InterPro" id="IPR029063">
    <property type="entry name" value="SAM-dependent_MTases_sf"/>
</dbReference>
<dbReference type="NCBIfam" id="NF041943">
    <property type="entry name" value="GPPMT_Stmyces"/>
    <property type="match status" value="1"/>
</dbReference>
<dbReference type="PANTHER" id="PTHR44068:SF11">
    <property type="entry name" value="GERANYL DIPHOSPHATE 2-C-METHYLTRANSFERASE"/>
    <property type="match status" value="1"/>
</dbReference>
<dbReference type="PANTHER" id="PTHR44068">
    <property type="entry name" value="ZGC:194242"/>
    <property type="match status" value="1"/>
</dbReference>
<dbReference type="Pfam" id="PF13649">
    <property type="entry name" value="Methyltransf_25"/>
    <property type="match status" value="1"/>
</dbReference>
<dbReference type="SUPFAM" id="SSF53335">
    <property type="entry name" value="S-adenosyl-L-methionine-dependent methyltransferases"/>
    <property type="match status" value="1"/>
</dbReference>
<keyword id="KW-0460">Magnesium</keyword>
<keyword id="KW-0489">Methyltransferase</keyword>
<keyword id="KW-1185">Reference proteome</keyword>
<keyword id="KW-0949">S-adenosyl-L-methionine</keyword>
<keyword id="KW-0808">Transferase</keyword>
<gene>
    <name type="ordered locus">SACE_3721</name>
</gene>